<proteinExistence type="evidence at protein level"/>
<organism>
    <name type="scientific">Xenopus tropicalis</name>
    <name type="common">Western clawed frog</name>
    <name type="synonym">Silurana tropicalis</name>
    <dbReference type="NCBI Taxonomy" id="8364"/>
    <lineage>
        <taxon>Eukaryota</taxon>
        <taxon>Metazoa</taxon>
        <taxon>Chordata</taxon>
        <taxon>Craniata</taxon>
        <taxon>Vertebrata</taxon>
        <taxon>Euteleostomi</taxon>
        <taxon>Amphibia</taxon>
        <taxon>Batrachia</taxon>
        <taxon>Anura</taxon>
        <taxon>Pipoidea</taxon>
        <taxon>Pipidae</taxon>
        <taxon>Xenopodinae</taxon>
        <taxon>Xenopus</taxon>
        <taxon>Silurana</taxon>
    </lineage>
</organism>
<dbReference type="EMBL" id="CR848464">
    <property type="protein sequence ID" value="CAJ81765.1"/>
    <property type="molecule type" value="mRNA"/>
</dbReference>
<dbReference type="EMBL" id="BC064851">
    <property type="protein sequence ID" value="AAH64851.1"/>
    <property type="molecule type" value="mRNA"/>
</dbReference>
<dbReference type="RefSeq" id="NP_989402.1">
    <property type="nucleotide sequence ID" value="NM_204071.1"/>
</dbReference>
<dbReference type="SMR" id="Q6P1W0"/>
<dbReference type="FunCoup" id="Q6P1W0">
    <property type="interactions" value="972"/>
</dbReference>
<dbReference type="STRING" id="8364.ENSXETP00000028254"/>
<dbReference type="PaxDb" id="8364-ENSXETP00000031497"/>
<dbReference type="DNASU" id="395039"/>
<dbReference type="GeneID" id="395039"/>
<dbReference type="KEGG" id="xtr:395039"/>
<dbReference type="AGR" id="Xenbase:XB-GENE-985623"/>
<dbReference type="CTD" id="51514"/>
<dbReference type="Xenbase" id="XB-GENE-985623">
    <property type="gene designation" value="dtl"/>
</dbReference>
<dbReference type="eggNOG" id="KOG0321">
    <property type="taxonomic scope" value="Eukaryota"/>
</dbReference>
<dbReference type="HOGENOM" id="CLU_023407_0_0_1"/>
<dbReference type="InParanoid" id="Q6P1W0"/>
<dbReference type="OMA" id="PHSQFEK"/>
<dbReference type="OrthoDB" id="2096344at2759"/>
<dbReference type="PhylomeDB" id="Q6P1W0"/>
<dbReference type="TreeFam" id="TF324483"/>
<dbReference type="Reactome" id="R-XTR-110314">
    <property type="pathway name" value="Recognition of DNA damage by PCNA-containing replication complex"/>
</dbReference>
<dbReference type="Reactome" id="R-XTR-8951664">
    <property type="pathway name" value="Neddylation"/>
</dbReference>
<dbReference type="UniPathway" id="UPA00143"/>
<dbReference type="Proteomes" id="UP000008143">
    <property type="component" value="Chromosome 5"/>
</dbReference>
<dbReference type="Bgee" id="ENSXETG00000014394">
    <property type="expression patterns" value="Expressed in 4-cell stage embryo and 8 other cell types or tissues"/>
</dbReference>
<dbReference type="ExpressionAtlas" id="Q6P1W0">
    <property type="expression patterns" value="baseline"/>
</dbReference>
<dbReference type="GO" id="GO:0005813">
    <property type="term" value="C:centrosome"/>
    <property type="evidence" value="ECO:0000250"/>
    <property type="project" value="UniProtKB"/>
</dbReference>
<dbReference type="GO" id="GO:0005694">
    <property type="term" value="C:chromosome"/>
    <property type="evidence" value="ECO:0007669"/>
    <property type="project" value="UniProtKB-SubCell"/>
</dbReference>
<dbReference type="GO" id="GO:0031464">
    <property type="term" value="C:Cul4A-RING E3 ubiquitin ligase complex"/>
    <property type="evidence" value="ECO:0000250"/>
    <property type="project" value="UniProtKB"/>
</dbReference>
<dbReference type="GO" id="GO:0031465">
    <property type="term" value="C:Cul4B-RING E3 ubiquitin ligase complex"/>
    <property type="evidence" value="ECO:0000250"/>
    <property type="project" value="UniProtKB"/>
</dbReference>
<dbReference type="GO" id="GO:0005737">
    <property type="term" value="C:cytoplasm"/>
    <property type="evidence" value="ECO:0007669"/>
    <property type="project" value="UniProtKB-KW"/>
</dbReference>
<dbReference type="GO" id="GO:0005634">
    <property type="term" value="C:nucleus"/>
    <property type="evidence" value="ECO:0000314"/>
    <property type="project" value="UniProtKB"/>
</dbReference>
<dbReference type="GO" id="GO:0031490">
    <property type="term" value="F:chromatin DNA binding"/>
    <property type="evidence" value="ECO:0000315"/>
    <property type="project" value="UniProtKB"/>
</dbReference>
<dbReference type="GO" id="GO:0006974">
    <property type="term" value="P:DNA damage response"/>
    <property type="evidence" value="ECO:0000315"/>
    <property type="project" value="UniProtKB"/>
</dbReference>
<dbReference type="GO" id="GO:0006260">
    <property type="term" value="P:DNA replication"/>
    <property type="evidence" value="ECO:0007669"/>
    <property type="project" value="UniProtKB-KW"/>
</dbReference>
<dbReference type="GO" id="GO:0007095">
    <property type="term" value="P:mitotic G2 DNA damage checkpoint signaling"/>
    <property type="evidence" value="ECO:0000250"/>
    <property type="project" value="UniProtKB"/>
</dbReference>
<dbReference type="GO" id="GO:2000060">
    <property type="term" value="P:positive regulation of ubiquitin-dependent protein catabolic process"/>
    <property type="evidence" value="ECO:0000315"/>
    <property type="project" value="UniProtKB"/>
</dbReference>
<dbReference type="GO" id="GO:0006513">
    <property type="term" value="P:protein monoubiquitination"/>
    <property type="evidence" value="ECO:0000250"/>
    <property type="project" value="UniProtKB"/>
</dbReference>
<dbReference type="GO" id="GO:0000209">
    <property type="term" value="P:protein polyubiquitination"/>
    <property type="evidence" value="ECO:0000250"/>
    <property type="project" value="UniProtKB"/>
</dbReference>
<dbReference type="GO" id="GO:0051726">
    <property type="term" value="P:regulation of cell cycle"/>
    <property type="evidence" value="ECO:0000250"/>
    <property type="project" value="UniProtKB"/>
</dbReference>
<dbReference type="GO" id="GO:0009411">
    <property type="term" value="P:response to UV"/>
    <property type="evidence" value="ECO:0000250"/>
    <property type="project" value="UniProtKB"/>
</dbReference>
<dbReference type="GO" id="GO:0048511">
    <property type="term" value="P:rhythmic process"/>
    <property type="evidence" value="ECO:0007669"/>
    <property type="project" value="UniProtKB-KW"/>
</dbReference>
<dbReference type="GO" id="GO:0019985">
    <property type="term" value="P:translesion synthesis"/>
    <property type="evidence" value="ECO:0000250"/>
    <property type="project" value="UniProtKB"/>
</dbReference>
<dbReference type="GO" id="GO:0006511">
    <property type="term" value="P:ubiquitin-dependent protein catabolic process"/>
    <property type="evidence" value="ECO:0000250"/>
    <property type="project" value="UniProtKB"/>
</dbReference>
<dbReference type="CDD" id="cd00200">
    <property type="entry name" value="WD40"/>
    <property type="match status" value="1"/>
</dbReference>
<dbReference type="FunFam" id="2.130.10.10:FF:000447">
    <property type="entry name" value="Denticleless protein homolog B"/>
    <property type="match status" value="1"/>
</dbReference>
<dbReference type="FunFam" id="2.130.10.10:FF:000171">
    <property type="entry name" value="denticleless protein homolog isoform X1"/>
    <property type="match status" value="1"/>
</dbReference>
<dbReference type="Gene3D" id="2.130.10.10">
    <property type="entry name" value="YVTN repeat-like/Quinoprotein amine dehydrogenase"/>
    <property type="match status" value="2"/>
</dbReference>
<dbReference type="InterPro" id="IPR020472">
    <property type="entry name" value="G-protein_beta_WD-40_rep"/>
</dbReference>
<dbReference type="InterPro" id="IPR051865">
    <property type="entry name" value="WD-repeat_CDT2_adapter"/>
</dbReference>
<dbReference type="InterPro" id="IPR015943">
    <property type="entry name" value="WD40/YVTN_repeat-like_dom_sf"/>
</dbReference>
<dbReference type="InterPro" id="IPR019775">
    <property type="entry name" value="WD40_repeat_CS"/>
</dbReference>
<dbReference type="InterPro" id="IPR036322">
    <property type="entry name" value="WD40_repeat_dom_sf"/>
</dbReference>
<dbReference type="InterPro" id="IPR001680">
    <property type="entry name" value="WD40_rpt"/>
</dbReference>
<dbReference type="PANTHER" id="PTHR22852:SF0">
    <property type="entry name" value="DENTICLELESS PROTEIN HOMOLOG"/>
    <property type="match status" value="1"/>
</dbReference>
<dbReference type="PANTHER" id="PTHR22852">
    <property type="entry name" value="LETHAL 2 DENTICLELESS PROTEIN RETINOIC ACID-REGULATED NUCLEAR MATRIX-ASSOCIATED PROTEIN"/>
    <property type="match status" value="1"/>
</dbReference>
<dbReference type="Pfam" id="PF00400">
    <property type="entry name" value="WD40"/>
    <property type="match status" value="5"/>
</dbReference>
<dbReference type="PRINTS" id="PR00320">
    <property type="entry name" value="GPROTEINBRPT"/>
</dbReference>
<dbReference type="SMART" id="SM00320">
    <property type="entry name" value="WD40"/>
    <property type="match status" value="7"/>
</dbReference>
<dbReference type="SUPFAM" id="SSF50978">
    <property type="entry name" value="WD40 repeat-like"/>
    <property type="match status" value="1"/>
</dbReference>
<dbReference type="PROSITE" id="PS00678">
    <property type="entry name" value="WD_REPEATS_1"/>
    <property type="match status" value="2"/>
</dbReference>
<dbReference type="PROSITE" id="PS50082">
    <property type="entry name" value="WD_REPEATS_2"/>
    <property type="match status" value="5"/>
</dbReference>
<dbReference type="PROSITE" id="PS50294">
    <property type="entry name" value="WD_REPEATS_REGION"/>
    <property type="match status" value="1"/>
</dbReference>
<feature type="chain" id="PRO_0000274870" description="Denticleless protein homolog">
    <location>
        <begin position="1"/>
        <end position="713"/>
    </location>
</feature>
<feature type="repeat" description="WD 1">
    <location>
        <begin position="47"/>
        <end position="89"/>
    </location>
</feature>
<feature type="repeat" description="WD 2">
    <location>
        <begin position="96"/>
        <end position="135"/>
    </location>
</feature>
<feature type="repeat" description="WD 3">
    <location>
        <begin position="138"/>
        <end position="178"/>
    </location>
</feature>
<feature type="repeat" description="WD 4">
    <location>
        <begin position="215"/>
        <end position="254"/>
    </location>
</feature>
<feature type="repeat" description="WD 5">
    <location>
        <begin position="270"/>
        <end position="309"/>
    </location>
</feature>
<feature type="repeat" description="WD 6">
    <location>
        <begin position="314"/>
        <end position="355"/>
    </location>
</feature>
<feature type="repeat" description="WD 7">
    <location>
        <begin position="359"/>
        <end position="399"/>
    </location>
</feature>
<feature type="region of interest" description="Disordered" evidence="4">
    <location>
        <begin position="474"/>
        <end position="544"/>
    </location>
</feature>
<feature type="region of interest" description="Disordered" evidence="4">
    <location>
        <begin position="604"/>
        <end position="623"/>
    </location>
</feature>
<feature type="region of interest" description="Disordered" evidence="4">
    <location>
        <begin position="635"/>
        <end position="700"/>
    </location>
</feature>
<feature type="short sequence motif" description="DDB1-binding motif" evidence="1">
    <location>
        <begin position="168"/>
        <end position="171"/>
    </location>
</feature>
<feature type="short sequence motif" description="Nuclear localization signal" evidence="3">
    <location>
        <begin position="197"/>
        <end position="204"/>
    </location>
</feature>
<feature type="short sequence motif" description="DDB1-binding motif" evidence="1">
    <location>
        <begin position="244"/>
        <end position="247"/>
    </location>
</feature>
<feature type="compositionally biased region" description="Polar residues" evidence="4">
    <location>
        <begin position="504"/>
        <end position="516"/>
    </location>
</feature>
<feature type="compositionally biased region" description="Polar residues" evidence="4">
    <location>
        <begin position="612"/>
        <end position="623"/>
    </location>
</feature>
<feature type="compositionally biased region" description="Basic and acidic residues" evidence="4">
    <location>
        <begin position="635"/>
        <end position="644"/>
    </location>
</feature>
<feature type="compositionally biased region" description="Polar residues" evidence="4">
    <location>
        <begin position="686"/>
        <end position="699"/>
    </location>
</feature>
<name>DTL_XENTR</name>
<gene>
    <name type="primary">dtl</name>
    <name type="synonym">cdt2</name>
    <name type="synonym">l2dtl</name>
    <name type="ORF">TEgg011o17.1</name>
</gene>
<reference key="1">
    <citation type="submission" date="2006-10" db="EMBL/GenBank/DDBJ databases">
        <authorList>
            <consortium name="Sanger Xenopus tropicalis EST/cDNA project"/>
        </authorList>
    </citation>
    <scope>NUCLEOTIDE SEQUENCE [LARGE SCALE MRNA]</scope>
    <source>
        <tissue>Egg</tissue>
    </source>
</reference>
<reference key="2">
    <citation type="submission" date="2004-01" db="EMBL/GenBank/DDBJ databases">
        <authorList>
            <consortium name="NIH - Xenopus Gene Collection (XGC) project"/>
        </authorList>
    </citation>
    <scope>NUCLEOTIDE SEQUENCE [LARGE SCALE MRNA]</scope>
    <source>
        <tissue>Embryo</tissue>
    </source>
</reference>
<reference key="3">
    <citation type="journal article" date="2006" name="Mol. Cell">
        <title>A family of diverse Cul4-Ddb1-interacting proteins includes Cdt2, which is required for S phase destruction of the replication factor Cdt1.</title>
        <authorList>
            <person name="Jin J."/>
            <person name="Arias E.E."/>
            <person name="Chen J."/>
            <person name="Harper J.W."/>
            <person name="Walter J.C."/>
        </authorList>
    </citation>
    <scope>FUNCTION</scope>
    <scope>INTERACTION WITH DDB1</scope>
    <scope>IDENTIFICATION IN A COMPLEX WITH DDB1 AND CUL4B</scope>
</reference>
<accession>Q6P1W0</accession>
<comment type="function">
    <text evidence="2 5">Substrate-specific adapter of a DCX (DDB1-CUL4-X-box) E3 ubiquitin-protein ligase complex required for cell cycle control, DNA damage response and translesion DNA synthesis. The DCX(DTL) complex, also named CRL4(CDT2) complex, mediates the polyubiquitination and subsequent degradation of CDT1, CDKN1A/p21(CIP1), KMT5A and SDE2. CDT1 degradation in response to DNA damage is necessary to ensure proper cell cycle regulation of DNA replication. CDKN1A/p21(CIP1) degradation during S phase or following UV irradiation is essential to control replication licensing. KMT5A degradation is also important for a proper regulation of mechanisms such as TGF-beta signaling, cell cycle progression, DNA repair and cell migration. Most substrates require their interaction with PCNA for their polyubiquitination: substrates interact with PCNA via their PIP-box, and those containing the 'K+4' motif in the PIP box, recruit the DCX(DTL) complex, leading to their degradation. In undamaged proliferating cells, the DCX(DTL) complex also promotes the 'Lys-164' monoubiquitination of PCNA, thereby being involved in PCNA-dependent translesion DNA synthesis (PubMed:16949367). May play a role in the regulation of the circadian clock (By similarity).</text>
</comment>
<comment type="pathway">
    <text>Protein modification; protein ubiquitination.</text>
</comment>
<comment type="subunit">
    <text evidence="5">Component of the DCX(DTL) E3 ubiquitin ligase complex, at least composed of cul4 (cul4a or cul4b), ddb1, dtl/cdt2 and rbx1.</text>
</comment>
<comment type="subcellular location">
    <subcellularLocation>
        <location evidence="2">Nucleus</location>
    </subcellularLocation>
    <subcellularLocation>
        <location evidence="1">Cytoplasm</location>
        <location evidence="1">Cytoskeleton</location>
        <location evidence="1">Microtubule organizing center</location>
        <location evidence="1">Centrosome</location>
    </subcellularLocation>
    <subcellularLocation>
        <location evidence="1">Chromosome</location>
    </subcellularLocation>
</comment>
<comment type="similarity">
    <text evidence="6">Belongs to the WD repeat cdt2 family.</text>
</comment>
<sequence length="713" mass="78193">MLFRSVVNKPRLGCRQRGVPFTHPLQSLLQCYQCAKHDEHTSYGELGAAVPPFGCAFSTVPDMSHVLAVANEEGIVRLYDTECRDVQRLVVKEFMAHTNAVFDIAWVPGEHKLVTASGDQTAKLWDVKAGDLIGECKGHQCSLKSVAFSKFEKAVFSTGGRDGNIMVWDTRCNKKDGFYRQVNQITGAHNALDKQTPSKVKKRKPYVRGLAPSVDSQQSVTVVIFQDEHTIISAGAVDGIVKVWDLRKNYSAYRQDPVPAKLFPYPGNSTRKLGYSNLVLDPTGTNLFASCTDDNVYMFNATGLKTEPVSVFGGHQNSTFYIKTSVSPDGQFLLSGSSDHSAYIWQVSDPKVPPVTLTGHCQEVTSVAWCQSDFTKIATCSDDNTVRVWRLKRSSEDSAQSDKTETVGWACQKKCVPPSMAANLCTPGKPSMIPSSSLMSSPTPATCAPSYTGDLPMPSSTPVSALLPIPKLQTPQRLNGEGLGASPKQTSSSKISIKDWITRTPKSSTRADTKTPSPRKAFTPVEQYPSVSSTRVQMPYEKRAKRRLETSSEDVEHVCLDHCNCVMELEPGLKKAKLDLCSFSEKERDGSDDKCLRLSDLSRGFDQEFSPGPSTSFLINGTVNPPLSPLSELKSDLRDKENSSPEKNWLSALGHKFKSDKSSPQNKAASSPSSRNSTSKKHPTRNAPNSPVSVPTTPGSMRKICTYFFKKSE</sequence>
<evidence type="ECO:0000250" key="1"/>
<evidence type="ECO:0000250" key="2">
    <source>
        <dbReference type="UniProtKB" id="Q9NZJ0"/>
    </source>
</evidence>
<evidence type="ECO:0000255" key="3"/>
<evidence type="ECO:0000256" key="4">
    <source>
        <dbReference type="SAM" id="MobiDB-lite"/>
    </source>
</evidence>
<evidence type="ECO:0000269" key="5">
    <source>
    </source>
</evidence>
<evidence type="ECO:0000305" key="6"/>
<protein>
    <recommendedName>
        <fullName>Denticleless protein homolog</fullName>
    </recommendedName>
</protein>
<keyword id="KW-0090">Biological rhythms</keyword>
<keyword id="KW-0158">Chromosome</keyword>
<keyword id="KW-0963">Cytoplasm</keyword>
<keyword id="KW-0206">Cytoskeleton</keyword>
<keyword id="KW-0227">DNA damage</keyword>
<keyword id="KW-0235">DNA replication</keyword>
<keyword id="KW-0539">Nucleus</keyword>
<keyword id="KW-1185">Reference proteome</keyword>
<keyword id="KW-0677">Repeat</keyword>
<keyword id="KW-0833">Ubl conjugation pathway</keyword>
<keyword id="KW-0853">WD repeat</keyword>